<protein>
    <recommendedName>
        <fullName>Inner membrane transport permease YadH</fullName>
    </recommendedName>
</protein>
<organism>
    <name type="scientific">Escherichia coli (strain K12)</name>
    <dbReference type="NCBI Taxonomy" id="83333"/>
    <lineage>
        <taxon>Bacteria</taxon>
        <taxon>Pseudomonadati</taxon>
        <taxon>Pseudomonadota</taxon>
        <taxon>Gammaproteobacteria</taxon>
        <taxon>Enterobacterales</taxon>
        <taxon>Enterobacteriaceae</taxon>
        <taxon>Escherichia</taxon>
    </lineage>
</organism>
<evidence type="ECO:0000255" key="1"/>
<evidence type="ECO:0000255" key="2">
    <source>
        <dbReference type="PROSITE-ProRule" id="PRU00442"/>
    </source>
</evidence>
<evidence type="ECO:0000305" key="3"/>
<name>YADH_ECOLI</name>
<keyword id="KW-0997">Cell inner membrane</keyword>
<keyword id="KW-1003">Cell membrane</keyword>
<keyword id="KW-0472">Membrane</keyword>
<keyword id="KW-1185">Reference proteome</keyword>
<keyword id="KW-0812">Transmembrane</keyword>
<keyword id="KW-1133">Transmembrane helix</keyword>
<keyword id="KW-0813">Transport</keyword>
<feature type="chain" id="PRO_0000182998" description="Inner membrane transport permease YadH">
    <location>
        <begin position="1"/>
        <end position="256"/>
    </location>
</feature>
<feature type="topological domain" description="Periplasmic" evidence="1">
    <location>
        <begin position="1"/>
        <end position="22"/>
    </location>
</feature>
<feature type="transmembrane region" description="Helical" evidence="1">
    <location>
        <begin position="23"/>
        <end position="43"/>
    </location>
</feature>
<feature type="topological domain" description="Cytoplasmic" evidence="1">
    <location>
        <begin position="44"/>
        <end position="52"/>
    </location>
</feature>
<feature type="transmembrane region" description="Helical" evidence="1">
    <location>
        <begin position="53"/>
        <end position="73"/>
    </location>
</feature>
<feature type="topological domain" description="Periplasmic" evidence="1">
    <location>
        <begin position="74"/>
        <end position="94"/>
    </location>
</feature>
<feature type="transmembrane region" description="Helical" evidence="1">
    <location>
        <begin position="95"/>
        <end position="115"/>
    </location>
</feature>
<feature type="topological domain" description="Cytoplasmic" evidence="1">
    <location>
        <position position="116"/>
    </location>
</feature>
<feature type="transmembrane region" description="Helical" evidence="1">
    <location>
        <begin position="117"/>
        <end position="137"/>
    </location>
</feature>
<feature type="topological domain" description="Periplasmic" evidence="1">
    <location>
        <position position="138"/>
    </location>
</feature>
<feature type="transmembrane region" description="Helical" evidence="1">
    <location>
        <begin position="139"/>
        <end position="159"/>
    </location>
</feature>
<feature type="topological domain" description="Cytoplasmic" evidence="1">
    <location>
        <begin position="160"/>
        <end position="169"/>
    </location>
</feature>
<feature type="transmembrane region" description="Helical" evidence="1">
    <location>
        <begin position="170"/>
        <end position="190"/>
    </location>
</feature>
<feature type="topological domain" description="Periplasmic" evidence="1">
    <location>
        <begin position="191"/>
        <end position="223"/>
    </location>
</feature>
<feature type="transmembrane region" description="Helical" evidence="1">
    <location>
        <begin position="224"/>
        <end position="244"/>
    </location>
</feature>
<feature type="topological domain" description="Cytoplasmic" evidence="1">
    <location>
        <begin position="245"/>
        <end position="256"/>
    </location>
</feature>
<feature type="domain" description="ABC transmembrane type-2" evidence="2">
    <location>
        <begin position="22"/>
        <end position="251"/>
    </location>
</feature>
<feature type="sequence conflict" description="In Ref. 2." evidence="3" ref="2">
    <original>F</original>
    <variation>L</variation>
    <location>
        <position position="214"/>
    </location>
</feature>
<accession>P0AFN6</accession>
<accession>P36880</accession>
<accession>P75657</accession>
<accession>Q8KMY9</accession>
<sequence>MMHLYWVALKSIWAKEIHRFMRIWVQTLVPPVITMTLYFIIFGNLIGSRIGDMHGFSYMQFIVPGLIMMSVITNAYANVASSFFGAKFQRNIEELLVAPVPTHVIIAGYVGGGVARGLFVGILVTAISLFFVPFQVHSWVFVALTLVLTAVLFSLAGLLNGVFAKTFDDISLVPTFVLTPLTYLGGVFYSLTLLPPFWQGLSHLNPIVYMISGFRYGFLGINDVPLVTTFGVLVVFIVAFYLICWSLIQRGRGLRS</sequence>
<comment type="subcellular location">
    <subcellularLocation>
        <location>Cell inner membrane</location>
        <topology>Multi-pass membrane protein</topology>
    </subcellularLocation>
</comment>
<comment type="similarity">
    <text evidence="3">Belongs to the ABC-2 integral membrane protein family.</text>
</comment>
<reference key="1">
    <citation type="journal article" date="1994" name="Nucleic Acids Res.">
        <title>Systematic sequencing of the Escherichia coli genome: analysis of the 2.4-4.1 min (110,917-193,643 bp) region.</title>
        <authorList>
            <person name="Fujita N."/>
            <person name="Mori H."/>
            <person name="Yura T."/>
            <person name="Ishihama A."/>
        </authorList>
    </citation>
    <scope>NUCLEOTIDE SEQUENCE [LARGE SCALE GENOMIC DNA]</scope>
    <source>
        <strain>K12 / W3110 / ATCC 27325 / DSM 5911</strain>
    </source>
</reference>
<reference key="2">
    <citation type="journal article" date="1997" name="Science">
        <title>The complete genome sequence of Escherichia coli K-12.</title>
        <authorList>
            <person name="Blattner F.R."/>
            <person name="Plunkett G. III"/>
            <person name="Bloch C.A."/>
            <person name="Perna N.T."/>
            <person name="Burland V."/>
            <person name="Riley M."/>
            <person name="Collado-Vides J."/>
            <person name="Glasner J.D."/>
            <person name="Rode C.K."/>
            <person name="Mayhew G.F."/>
            <person name="Gregor J."/>
            <person name="Davis N.W."/>
            <person name="Kirkpatrick H.A."/>
            <person name="Goeden M.A."/>
            <person name="Rose D.J."/>
            <person name="Mau B."/>
            <person name="Shao Y."/>
        </authorList>
    </citation>
    <scope>NUCLEOTIDE SEQUENCE [LARGE SCALE GENOMIC DNA]</scope>
    <source>
        <strain>K12 / MG1655 / ATCC 47076</strain>
    </source>
</reference>
<reference key="3">
    <citation type="journal article" date="2006" name="Mol. Syst. Biol.">
        <title>Highly accurate genome sequences of Escherichia coli K-12 strains MG1655 and W3110.</title>
        <authorList>
            <person name="Hayashi K."/>
            <person name="Morooka N."/>
            <person name="Yamamoto Y."/>
            <person name="Fujita K."/>
            <person name="Isono K."/>
            <person name="Choi S."/>
            <person name="Ohtsubo E."/>
            <person name="Baba T."/>
            <person name="Wanner B.L."/>
            <person name="Mori H."/>
            <person name="Horiuchi T."/>
        </authorList>
    </citation>
    <scope>NUCLEOTIDE SEQUENCE [LARGE SCALE GENOMIC DNA]</scope>
    <scope>SEQUENCE REVISION</scope>
    <source>
        <strain>K12 / W3110 / ATCC 27325 / DSM 5911</strain>
    </source>
</reference>
<reference key="4">
    <citation type="journal article" date="2005" name="Science">
        <title>Global topology analysis of the Escherichia coli inner membrane proteome.</title>
        <authorList>
            <person name="Daley D.O."/>
            <person name="Rapp M."/>
            <person name="Granseth E."/>
            <person name="Melen K."/>
            <person name="Drew D."/>
            <person name="von Heijne G."/>
        </authorList>
    </citation>
    <scope>TOPOLOGY [LARGE SCALE ANALYSIS]</scope>
    <source>
        <strain>K12 / MG1655 / ATCC 47076</strain>
    </source>
</reference>
<dbReference type="EMBL" id="U00096">
    <property type="protein sequence ID" value="AAC73239.1"/>
    <property type="molecule type" value="Genomic_DNA"/>
</dbReference>
<dbReference type="EMBL" id="AP009048">
    <property type="protein sequence ID" value="BAB96705.2"/>
    <property type="molecule type" value="Genomic_DNA"/>
</dbReference>
<dbReference type="PIR" id="H64735">
    <property type="entry name" value="H64735"/>
</dbReference>
<dbReference type="RefSeq" id="NP_414670.1">
    <property type="nucleotide sequence ID" value="NC_000913.3"/>
</dbReference>
<dbReference type="RefSeq" id="WP_000972203.1">
    <property type="nucleotide sequence ID" value="NZ_STEB01000010.1"/>
</dbReference>
<dbReference type="SMR" id="P0AFN6"/>
<dbReference type="BioGRID" id="4259734">
    <property type="interactions" value="47"/>
</dbReference>
<dbReference type="FunCoup" id="P0AFN6">
    <property type="interactions" value="396"/>
</dbReference>
<dbReference type="STRING" id="511145.b0128"/>
<dbReference type="TCDB" id="3.A.1.105.17">
    <property type="family name" value="the atp-binding cassette (abc) superfamily"/>
</dbReference>
<dbReference type="PaxDb" id="511145-b0128"/>
<dbReference type="EnsemblBacteria" id="AAC73239">
    <property type="protein sequence ID" value="AAC73239"/>
    <property type="gene ID" value="b0128"/>
</dbReference>
<dbReference type="GeneID" id="944836"/>
<dbReference type="KEGG" id="ecj:JW0124"/>
<dbReference type="KEGG" id="eco:b0128"/>
<dbReference type="KEGG" id="ecoc:C3026_00545"/>
<dbReference type="PATRIC" id="fig|1411691.4.peg.2154"/>
<dbReference type="EchoBASE" id="EB2226"/>
<dbReference type="eggNOG" id="COG0842">
    <property type="taxonomic scope" value="Bacteria"/>
</dbReference>
<dbReference type="HOGENOM" id="CLU_039483_3_0_6"/>
<dbReference type="InParanoid" id="P0AFN6"/>
<dbReference type="OMA" id="VAWIFKT"/>
<dbReference type="OrthoDB" id="9804001at2"/>
<dbReference type="PhylomeDB" id="P0AFN6"/>
<dbReference type="BioCyc" id="EcoCyc:YADH-MONOMER"/>
<dbReference type="PRO" id="PR:P0AFN6"/>
<dbReference type="Proteomes" id="UP000000625">
    <property type="component" value="Chromosome"/>
</dbReference>
<dbReference type="GO" id="GO:0043190">
    <property type="term" value="C:ATP-binding cassette (ABC) transporter complex"/>
    <property type="evidence" value="ECO:0007669"/>
    <property type="project" value="InterPro"/>
</dbReference>
<dbReference type="GO" id="GO:0005886">
    <property type="term" value="C:plasma membrane"/>
    <property type="evidence" value="ECO:0000314"/>
    <property type="project" value="EcoCyc"/>
</dbReference>
<dbReference type="GO" id="GO:0140359">
    <property type="term" value="F:ABC-type transporter activity"/>
    <property type="evidence" value="ECO:0007669"/>
    <property type="project" value="InterPro"/>
</dbReference>
<dbReference type="InterPro" id="IPR052522">
    <property type="entry name" value="ABC-2_transport_permease"/>
</dbReference>
<dbReference type="InterPro" id="IPR013525">
    <property type="entry name" value="ABC2_TM"/>
</dbReference>
<dbReference type="InterPro" id="IPR047817">
    <property type="entry name" value="ABC2_TM_bact-type"/>
</dbReference>
<dbReference type="InterPro" id="IPR000412">
    <property type="entry name" value="ABC_2_transport"/>
</dbReference>
<dbReference type="NCBIfam" id="NF011648">
    <property type="entry name" value="PRK15066.1"/>
    <property type="match status" value="1"/>
</dbReference>
<dbReference type="PANTHER" id="PTHR43332:SF2">
    <property type="entry name" value="INNER MEMBRANE TRANSPORT PERMEASE YADH"/>
    <property type="match status" value="1"/>
</dbReference>
<dbReference type="PANTHER" id="PTHR43332">
    <property type="entry name" value="INNER MEMBRANE TRANSPORT PERMEASE YADH-RELATED"/>
    <property type="match status" value="1"/>
</dbReference>
<dbReference type="Pfam" id="PF01061">
    <property type="entry name" value="ABC2_membrane"/>
    <property type="match status" value="1"/>
</dbReference>
<dbReference type="PIRSF" id="PIRSF006648">
    <property type="entry name" value="DrrB"/>
    <property type="match status" value="1"/>
</dbReference>
<dbReference type="PRINTS" id="PR00164">
    <property type="entry name" value="ABC2TRNSPORT"/>
</dbReference>
<dbReference type="PROSITE" id="PS51012">
    <property type="entry name" value="ABC_TM2"/>
    <property type="match status" value="1"/>
</dbReference>
<gene>
    <name type="primary">yadH</name>
    <name type="ordered locus">b0128</name>
    <name type="ordered locus">JW0124</name>
</gene>
<proteinExistence type="evidence at protein level"/>